<dbReference type="EMBL" id="D13690">
    <property type="protein sequence ID" value="BAA02849.1"/>
    <property type="molecule type" value="Genomic_DNA"/>
</dbReference>
<dbReference type="EMBL" id="D12510">
    <property type="protein sequence ID" value="BAA02073.1"/>
    <property type="molecule type" value="Genomic_DNA"/>
</dbReference>
<dbReference type="PIR" id="S30924">
    <property type="entry name" value="S30924"/>
</dbReference>
<dbReference type="SMR" id="P52617"/>
<dbReference type="GO" id="GO:0003677">
    <property type="term" value="F:DNA binding"/>
    <property type="evidence" value="ECO:0007669"/>
    <property type="project" value="UniProtKB-KW"/>
</dbReference>
<dbReference type="GO" id="GO:0003700">
    <property type="term" value="F:DNA-binding transcription factor activity"/>
    <property type="evidence" value="ECO:0007669"/>
    <property type="project" value="InterPro"/>
</dbReference>
<dbReference type="InterPro" id="IPR003223">
    <property type="entry name" value="Flag1_repressor"/>
</dbReference>
<dbReference type="Pfam" id="PF03614">
    <property type="entry name" value="Flag1_repress"/>
    <property type="match status" value="1"/>
</dbReference>
<comment type="function">
    <text>Transcriptional repressor of the FliC phase-1 flagellin.</text>
</comment>
<keyword id="KW-0238">DNA-binding</keyword>
<keyword id="KW-0678">Repressor</keyword>
<keyword id="KW-0804">Transcription</keyword>
<keyword id="KW-0805">Transcription regulation</keyword>
<accession>P52617</accession>
<proteinExistence type="predicted"/>
<sequence>MECIAVNDISYGREAEIWPRDYSMLARRVQFLRFNDILVRLVSNNARIITGYIAKFNPRENLILASDKPKGNKRIEVKLESLAILEELSGNDAFNLSLVPADEFNLQQYTPSRRDYFSICNKCYKQGVGIKIYMKYGQVLTGKTTGVNACQVGVRTSNGNHMQVMFDWVSRITSSDYAE</sequence>
<name>FLJA_SALAE</name>
<gene>
    <name type="primary">fljA</name>
</gene>
<feature type="chain" id="PRO_0000087293" description="Repressor of phase 1 flagellin gene">
    <location>
        <begin position="1"/>
        <end position="179"/>
    </location>
</feature>
<protein>
    <recommendedName>
        <fullName>Repressor of phase 1 flagellin gene</fullName>
    </recommendedName>
</protein>
<reference key="1">
    <citation type="journal article" date="1993" name="Mol. Gen. Genet.">
        <title>Nucleotide sequence and regulated expression of the Salmonella fljA gene encoding a repressor of the phase 1 flagellin gene.</title>
        <authorList>
            <person name="Hanafusa T."/>
            <person name="Saito K."/>
            <person name="Tominaga A."/>
            <person name="Enomoto M."/>
        </authorList>
    </citation>
    <scope>NUCLEOTIDE SEQUENCE [GENOMIC DNA]</scope>
    <source>
        <strain>SL4266</strain>
    </source>
</reference>
<reference key="2">
    <citation type="journal article" date="1993" name="J. Bacteriol.">
        <title>Conversion of the Salmonella phase 1 flagellin gene fliC to the phase 2 gene fljB on the Escherichia coli K-12 chromosome.</title>
        <authorList>
            <person name="Okazaki N."/>
            <person name="Matsuo S."/>
            <person name="Saito K."/>
            <person name="Tominaga A."/>
            <person name="Enomoto M."/>
        </authorList>
    </citation>
    <scope>NUCLEOTIDE SEQUENCE [GENOMIC DNA]</scope>
</reference>
<organism>
    <name type="scientific">Salmonella abortus-equi</name>
    <dbReference type="NCBI Taxonomy" id="607"/>
    <lineage>
        <taxon>Bacteria</taxon>
        <taxon>Pseudomonadati</taxon>
        <taxon>Pseudomonadota</taxon>
        <taxon>Gammaproteobacteria</taxon>
        <taxon>Enterobacterales</taxon>
        <taxon>Enterobacteriaceae</taxon>
        <taxon>Salmonella</taxon>
    </lineage>
</organism>